<dbReference type="EC" id="3.4.24.84" evidence="12 13"/>
<dbReference type="EMBL" id="AB016068">
    <property type="protein sequence ID" value="BAA33727.1"/>
    <property type="molecule type" value="mRNA"/>
</dbReference>
<dbReference type="EMBL" id="AF064867">
    <property type="protein sequence ID" value="AAC68866.1"/>
    <property type="molecule type" value="mRNA"/>
</dbReference>
<dbReference type="EMBL" id="Y13834">
    <property type="protein sequence ID" value="CAB46277.1"/>
    <property type="molecule type" value="mRNA"/>
</dbReference>
<dbReference type="EMBL" id="AK075007">
    <property type="protein sequence ID" value="BAG52049.1"/>
    <property type="molecule type" value="mRNA"/>
</dbReference>
<dbReference type="EMBL" id="AL050341">
    <property type="status" value="NOT_ANNOTATED_CDS"/>
    <property type="molecule type" value="Genomic_DNA"/>
</dbReference>
<dbReference type="EMBL" id="CH471059">
    <property type="protein sequence ID" value="EAX07233.1"/>
    <property type="molecule type" value="Genomic_DNA"/>
</dbReference>
<dbReference type="EMBL" id="CH471059">
    <property type="protein sequence ID" value="EAX07234.1"/>
    <property type="molecule type" value="Genomic_DNA"/>
</dbReference>
<dbReference type="EMBL" id="BC037283">
    <property type="protein sequence ID" value="AAH37283.1"/>
    <property type="molecule type" value="mRNA"/>
</dbReference>
<dbReference type="CCDS" id="CCDS449.1"/>
<dbReference type="RefSeq" id="NP_005848.2">
    <property type="nucleotide sequence ID" value="NM_005857.4"/>
</dbReference>
<dbReference type="PDB" id="2YPT">
    <property type="method" value="X-ray"/>
    <property type="resolution" value="3.80 A"/>
    <property type="chains" value="A/B/D/E=1-475"/>
</dbReference>
<dbReference type="PDB" id="4AW6">
    <property type="method" value="X-ray"/>
    <property type="resolution" value="3.40 A"/>
    <property type="chains" value="A/B/D/E=1-475"/>
</dbReference>
<dbReference type="PDB" id="5SYT">
    <property type="method" value="X-ray"/>
    <property type="resolution" value="2.00 A"/>
    <property type="chains" value="A=1-474"/>
</dbReference>
<dbReference type="PDB" id="6BH8">
    <property type="method" value="X-ray"/>
    <property type="resolution" value="3.85 A"/>
    <property type="chains" value="A/B=1-475"/>
</dbReference>
<dbReference type="PDBsum" id="2YPT"/>
<dbReference type="PDBsum" id="4AW6"/>
<dbReference type="PDBsum" id="5SYT"/>
<dbReference type="PDBsum" id="6BH8"/>
<dbReference type="SMR" id="O75844"/>
<dbReference type="BioGRID" id="115560">
    <property type="interactions" value="187"/>
</dbReference>
<dbReference type="DIP" id="DIP-39641N"/>
<dbReference type="FunCoup" id="O75844">
    <property type="interactions" value="1614"/>
</dbReference>
<dbReference type="IntAct" id="O75844">
    <property type="interactions" value="84"/>
</dbReference>
<dbReference type="STRING" id="9606.ENSP00000361845"/>
<dbReference type="ChEMBL" id="CHEMBL3739253"/>
<dbReference type="MEROPS" id="M48.003"/>
<dbReference type="TCDB" id="9.B.1.1.1">
    <property type="family name" value="the integral membrane caax protease (caax protease) family"/>
</dbReference>
<dbReference type="GlyGen" id="O75844">
    <property type="glycosylation" value="1 site, 1 O-linked glycan (1 site)"/>
</dbReference>
<dbReference type="iPTMnet" id="O75844"/>
<dbReference type="MetOSite" id="O75844"/>
<dbReference type="PhosphoSitePlus" id="O75844"/>
<dbReference type="SwissPalm" id="O75844"/>
<dbReference type="BioMuta" id="ZMPSTE24"/>
<dbReference type="jPOST" id="O75844"/>
<dbReference type="MassIVE" id="O75844"/>
<dbReference type="PaxDb" id="9606-ENSP00000361845"/>
<dbReference type="PeptideAtlas" id="O75844"/>
<dbReference type="ProteomicsDB" id="50226"/>
<dbReference type="Pumba" id="O75844"/>
<dbReference type="Antibodypedia" id="1711">
    <property type="antibodies" value="426 antibodies from 31 providers"/>
</dbReference>
<dbReference type="DNASU" id="10269"/>
<dbReference type="Ensembl" id="ENST00000372759.4">
    <property type="protein sequence ID" value="ENSP00000361845.3"/>
    <property type="gene ID" value="ENSG00000084073.10"/>
</dbReference>
<dbReference type="GeneID" id="10269"/>
<dbReference type="KEGG" id="hsa:10269"/>
<dbReference type="MANE-Select" id="ENST00000372759.4">
    <property type="protein sequence ID" value="ENSP00000361845.3"/>
    <property type="RefSeq nucleotide sequence ID" value="NM_005857.5"/>
    <property type="RefSeq protein sequence ID" value="NP_005848.2"/>
</dbReference>
<dbReference type="UCSC" id="uc001cfg.5">
    <property type="organism name" value="human"/>
</dbReference>
<dbReference type="AGR" id="HGNC:12877"/>
<dbReference type="CTD" id="10269"/>
<dbReference type="DisGeNET" id="10269"/>
<dbReference type="GeneCards" id="ZMPSTE24"/>
<dbReference type="HGNC" id="HGNC:12877">
    <property type="gene designation" value="ZMPSTE24"/>
</dbReference>
<dbReference type="HPA" id="ENSG00000084073">
    <property type="expression patterns" value="Low tissue specificity"/>
</dbReference>
<dbReference type="MalaCards" id="ZMPSTE24"/>
<dbReference type="MIM" id="275210">
    <property type="type" value="phenotype"/>
</dbReference>
<dbReference type="MIM" id="606480">
    <property type="type" value="gene"/>
</dbReference>
<dbReference type="MIM" id="608612">
    <property type="type" value="phenotype"/>
</dbReference>
<dbReference type="neXtProt" id="NX_O75844"/>
<dbReference type="OpenTargets" id="ENSG00000084073"/>
<dbReference type="Orphanet" id="740">
    <property type="disease" value="Hutchinson-Gilford progeria syndrome"/>
</dbReference>
<dbReference type="Orphanet" id="90154">
    <property type="disease" value="Mandibuloacral dysplasia with type B lipodystrophy"/>
</dbReference>
<dbReference type="Orphanet" id="1662">
    <property type="disease" value="Restrictive dermopathy"/>
</dbReference>
<dbReference type="PharmGKB" id="PA37466"/>
<dbReference type="VEuPathDB" id="HostDB:ENSG00000084073"/>
<dbReference type="eggNOG" id="KOG2719">
    <property type="taxonomic scope" value="Eukaryota"/>
</dbReference>
<dbReference type="GeneTree" id="ENSGT00390000002053"/>
<dbReference type="HOGENOM" id="CLU_025947_3_0_1"/>
<dbReference type="InParanoid" id="O75844"/>
<dbReference type="OMA" id="FVIEEKF"/>
<dbReference type="OrthoDB" id="360839at2759"/>
<dbReference type="PAN-GO" id="O75844">
    <property type="GO annotations" value="3 GO annotations based on evolutionary models"/>
</dbReference>
<dbReference type="PhylomeDB" id="O75844"/>
<dbReference type="TreeFam" id="TF105972"/>
<dbReference type="BRENDA" id="3.4.24.84">
    <property type="organism ID" value="2681"/>
</dbReference>
<dbReference type="PathwayCommons" id="O75844"/>
<dbReference type="SignaLink" id="O75844"/>
<dbReference type="BioGRID-ORCS" id="10269">
    <property type="hits" value="26 hits in 1158 CRISPR screens"/>
</dbReference>
<dbReference type="ChiTaRS" id="ZMPSTE24">
    <property type="organism name" value="human"/>
</dbReference>
<dbReference type="EvolutionaryTrace" id="O75844"/>
<dbReference type="GenomeRNAi" id="10269"/>
<dbReference type="Pharos" id="O75844">
    <property type="development level" value="Tbio"/>
</dbReference>
<dbReference type="PRO" id="PR:O75844"/>
<dbReference type="Proteomes" id="UP000005640">
    <property type="component" value="Chromosome 1"/>
</dbReference>
<dbReference type="RNAct" id="O75844">
    <property type="molecule type" value="protein"/>
</dbReference>
<dbReference type="Bgee" id="ENSG00000084073">
    <property type="expression patterns" value="Expressed in hair follicle and 212 other cell types or tissues"/>
</dbReference>
<dbReference type="ExpressionAtlas" id="O75844">
    <property type="expression patterns" value="baseline and differential"/>
</dbReference>
<dbReference type="GO" id="GO:0031901">
    <property type="term" value="C:early endosome membrane"/>
    <property type="evidence" value="ECO:0007669"/>
    <property type="project" value="UniProtKB-SubCell"/>
</dbReference>
<dbReference type="GO" id="GO:0005789">
    <property type="term" value="C:endoplasmic reticulum membrane"/>
    <property type="evidence" value="ECO:0000318"/>
    <property type="project" value="GO_Central"/>
</dbReference>
<dbReference type="GO" id="GO:0070062">
    <property type="term" value="C:extracellular exosome"/>
    <property type="evidence" value="ECO:0007005"/>
    <property type="project" value="UniProtKB"/>
</dbReference>
<dbReference type="GO" id="GO:0031902">
    <property type="term" value="C:late endosome membrane"/>
    <property type="evidence" value="ECO:0007669"/>
    <property type="project" value="UniProtKB-SubCell"/>
</dbReference>
<dbReference type="GO" id="GO:0016020">
    <property type="term" value="C:membrane"/>
    <property type="evidence" value="ECO:0007005"/>
    <property type="project" value="UniProtKB"/>
</dbReference>
<dbReference type="GO" id="GO:0005637">
    <property type="term" value="C:nuclear inner membrane"/>
    <property type="evidence" value="ECO:0007669"/>
    <property type="project" value="UniProtKB-SubCell"/>
</dbReference>
<dbReference type="GO" id="GO:0032991">
    <property type="term" value="C:protein-containing complex"/>
    <property type="evidence" value="ECO:0000314"/>
    <property type="project" value="MGI"/>
</dbReference>
<dbReference type="GO" id="GO:0003690">
    <property type="term" value="F:double-stranded DNA binding"/>
    <property type="evidence" value="ECO:0007669"/>
    <property type="project" value="Ensembl"/>
</dbReference>
<dbReference type="GO" id="GO:0004175">
    <property type="term" value="F:endopeptidase activity"/>
    <property type="evidence" value="ECO:0000314"/>
    <property type="project" value="UniProt"/>
</dbReference>
<dbReference type="GO" id="GO:0046872">
    <property type="term" value="F:metal ion binding"/>
    <property type="evidence" value="ECO:0007669"/>
    <property type="project" value="UniProtKB-KW"/>
</dbReference>
<dbReference type="GO" id="GO:0004222">
    <property type="term" value="F:metalloendopeptidase activity"/>
    <property type="evidence" value="ECO:0000318"/>
    <property type="project" value="GO_Central"/>
</dbReference>
<dbReference type="GO" id="GO:0008235">
    <property type="term" value="F:metalloexopeptidase activity"/>
    <property type="evidence" value="ECO:0000304"/>
    <property type="project" value="ProtInc"/>
</dbReference>
<dbReference type="GO" id="GO:0007628">
    <property type="term" value="P:adult walking behavior"/>
    <property type="evidence" value="ECO:0007669"/>
    <property type="project" value="Ensembl"/>
</dbReference>
<dbReference type="GO" id="GO:0030282">
    <property type="term" value="P:bone mineralization"/>
    <property type="evidence" value="ECO:0007669"/>
    <property type="project" value="Ensembl"/>
</dbReference>
<dbReference type="GO" id="GO:0071586">
    <property type="term" value="P:CAAX-box protein processing"/>
    <property type="evidence" value="ECO:0000318"/>
    <property type="project" value="GO_Central"/>
</dbReference>
<dbReference type="GO" id="GO:1990036">
    <property type="term" value="P:calcium ion import into sarcoplasmic reticulum"/>
    <property type="evidence" value="ECO:0007669"/>
    <property type="project" value="Ensembl"/>
</dbReference>
<dbReference type="GO" id="GO:0061762">
    <property type="term" value="P:CAMKK-AMPK signaling cascade"/>
    <property type="evidence" value="ECO:0007669"/>
    <property type="project" value="Ensembl"/>
</dbReference>
<dbReference type="GO" id="GO:0061337">
    <property type="term" value="P:cardiac conduction"/>
    <property type="evidence" value="ECO:0007669"/>
    <property type="project" value="Ensembl"/>
</dbReference>
<dbReference type="GO" id="GO:0055013">
    <property type="term" value="P:cardiac muscle cell development"/>
    <property type="evidence" value="ECO:0007669"/>
    <property type="project" value="Ensembl"/>
</dbReference>
<dbReference type="GO" id="GO:0003231">
    <property type="term" value="P:cardiac ventricle development"/>
    <property type="evidence" value="ECO:0007669"/>
    <property type="project" value="Ensembl"/>
</dbReference>
<dbReference type="GO" id="GO:0071480">
    <property type="term" value="P:cellular response to gamma radiation"/>
    <property type="evidence" value="ECO:0007669"/>
    <property type="project" value="Ensembl"/>
</dbReference>
<dbReference type="GO" id="GO:0008340">
    <property type="term" value="P:determination of adult lifespan"/>
    <property type="evidence" value="ECO:0007669"/>
    <property type="project" value="Ensembl"/>
</dbReference>
<dbReference type="GO" id="GO:0006281">
    <property type="term" value="P:DNA repair"/>
    <property type="evidence" value="ECO:0007669"/>
    <property type="project" value="Ensembl"/>
</dbReference>
<dbReference type="GO" id="GO:0003417">
    <property type="term" value="P:growth plate cartilage development"/>
    <property type="evidence" value="ECO:0007669"/>
    <property type="project" value="Ensembl"/>
</dbReference>
<dbReference type="GO" id="GO:0001942">
    <property type="term" value="P:hair follicle development"/>
    <property type="evidence" value="ECO:0007669"/>
    <property type="project" value="Ensembl"/>
</dbReference>
<dbReference type="GO" id="GO:0003007">
    <property type="term" value="P:heart morphogenesis"/>
    <property type="evidence" value="ECO:0007669"/>
    <property type="project" value="Ensembl"/>
</dbReference>
<dbReference type="GO" id="GO:0006925">
    <property type="term" value="P:inflammatory cell apoptotic process"/>
    <property type="evidence" value="ECO:0007669"/>
    <property type="project" value="Ensembl"/>
</dbReference>
<dbReference type="GO" id="GO:0060993">
    <property type="term" value="P:kidney morphogenesis"/>
    <property type="evidence" value="ECO:0007669"/>
    <property type="project" value="Ensembl"/>
</dbReference>
<dbReference type="GO" id="GO:0006629">
    <property type="term" value="P:lipid metabolic process"/>
    <property type="evidence" value="ECO:0007669"/>
    <property type="project" value="Ensembl"/>
</dbReference>
<dbReference type="GO" id="GO:0001889">
    <property type="term" value="P:liver development"/>
    <property type="evidence" value="ECO:0007669"/>
    <property type="project" value="Ensembl"/>
</dbReference>
<dbReference type="GO" id="GO:0043007">
    <property type="term" value="P:maintenance of rDNA"/>
    <property type="evidence" value="ECO:0007669"/>
    <property type="project" value="Ensembl"/>
</dbReference>
<dbReference type="GO" id="GO:0035264">
    <property type="term" value="P:multicellular organism growth"/>
    <property type="evidence" value="ECO:0007669"/>
    <property type="project" value="Ensembl"/>
</dbReference>
<dbReference type="GO" id="GO:1903799">
    <property type="term" value="P:negative regulation of miRNA processing"/>
    <property type="evidence" value="ECO:0007669"/>
    <property type="project" value="Ensembl"/>
</dbReference>
<dbReference type="GO" id="GO:0050905">
    <property type="term" value="P:neuromuscular process"/>
    <property type="evidence" value="ECO:0007669"/>
    <property type="project" value="Ensembl"/>
</dbReference>
<dbReference type="GO" id="GO:0006998">
    <property type="term" value="P:nuclear envelope organization"/>
    <property type="evidence" value="ECO:0007669"/>
    <property type="project" value="Ensembl"/>
</dbReference>
<dbReference type="GO" id="GO:0044029">
    <property type="term" value="P:positive regulation of gene expression via chromosomal CpG island demethylation"/>
    <property type="evidence" value="ECO:0007669"/>
    <property type="project" value="Ensembl"/>
</dbReference>
<dbReference type="GO" id="GO:0030327">
    <property type="term" value="P:prenylated protein catabolic process"/>
    <property type="evidence" value="ECO:0007669"/>
    <property type="project" value="Ensembl"/>
</dbReference>
<dbReference type="GO" id="GO:0051604">
    <property type="term" value="P:protein maturation"/>
    <property type="evidence" value="ECO:0000314"/>
    <property type="project" value="UniProt"/>
</dbReference>
<dbReference type="GO" id="GO:0006508">
    <property type="term" value="P:proteolysis"/>
    <property type="evidence" value="ECO:0000304"/>
    <property type="project" value="ProtInc"/>
</dbReference>
<dbReference type="GO" id="GO:0010506">
    <property type="term" value="P:regulation of autophagy"/>
    <property type="evidence" value="ECO:0007669"/>
    <property type="project" value="Ensembl"/>
</dbReference>
<dbReference type="GO" id="GO:0030500">
    <property type="term" value="P:regulation of bone mineralization"/>
    <property type="evidence" value="ECO:0007669"/>
    <property type="project" value="Ensembl"/>
</dbReference>
<dbReference type="GO" id="GO:0008360">
    <property type="term" value="P:regulation of cell shape"/>
    <property type="evidence" value="ECO:0007669"/>
    <property type="project" value="Ensembl"/>
</dbReference>
<dbReference type="GO" id="GO:2000772">
    <property type="term" value="P:regulation of cellular senescence"/>
    <property type="evidence" value="ECO:0007669"/>
    <property type="project" value="Ensembl"/>
</dbReference>
<dbReference type="GO" id="GO:0050688">
    <property type="term" value="P:regulation of defense response to virus"/>
    <property type="evidence" value="ECO:0000314"/>
    <property type="project" value="MGI"/>
</dbReference>
<dbReference type="GO" id="GO:0043516">
    <property type="term" value="P:regulation of DNA damage response, signal transduction by p53 class mediator"/>
    <property type="evidence" value="ECO:0007669"/>
    <property type="project" value="Ensembl"/>
</dbReference>
<dbReference type="GO" id="GO:0048145">
    <property type="term" value="P:regulation of fibroblast proliferation"/>
    <property type="evidence" value="ECO:0007669"/>
    <property type="project" value="Ensembl"/>
</dbReference>
<dbReference type="GO" id="GO:0010906">
    <property type="term" value="P:regulation of glucose metabolic process"/>
    <property type="evidence" value="ECO:0007669"/>
    <property type="project" value="Ensembl"/>
</dbReference>
<dbReference type="GO" id="GO:0032350">
    <property type="term" value="P:regulation of hormone metabolic process"/>
    <property type="evidence" value="ECO:0007669"/>
    <property type="project" value="Ensembl"/>
</dbReference>
<dbReference type="GO" id="GO:0019216">
    <property type="term" value="P:regulation of lipid metabolic process"/>
    <property type="evidence" value="ECO:0007669"/>
    <property type="project" value="Ensembl"/>
</dbReference>
<dbReference type="GO" id="GO:1903463">
    <property type="term" value="P:regulation of mitotic cell cycle DNA replication"/>
    <property type="evidence" value="ECO:0007669"/>
    <property type="project" value="Ensembl"/>
</dbReference>
<dbReference type="GO" id="GO:0040014">
    <property type="term" value="P:regulation of multicellular organism growth"/>
    <property type="evidence" value="ECO:0007669"/>
    <property type="project" value="Ensembl"/>
</dbReference>
<dbReference type="GO" id="GO:0070302">
    <property type="term" value="P:regulation of stress-activated protein kinase signaling cascade"/>
    <property type="evidence" value="ECO:0007669"/>
    <property type="project" value="Ensembl"/>
</dbReference>
<dbReference type="GO" id="GO:2000730">
    <property type="term" value="P:regulation of termination of RNA polymerase I transcription"/>
    <property type="evidence" value="ECO:0007669"/>
    <property type="project" value="Ensembl"/>
</dbReference>
<dbReference type="GO" id="GO:0032006">
    <property type="term" value="P:regulation of TOR signaling"/>
    <property type="evidence" value="ECO:0007669"/>
    <property type="project" value="Ensembl"/>
</dbReference>
<dbReference type="GO" id="GO:0060307">
    <property type="term" value="P:regulation of ventricular cardiac muscle cell membrane repolarization"/>
    <property type="evidence" value="ECO:0007669"/>
    <property type="project" value="Ensembl"/>
</dbReference>
<dbReference type="GO" id="GO:0072423">
    <property type="term" value="P:response to DNA damage checkpoint signaling"/>
    <property type="evidence" value="ECO:0007669"/>
    <property type="project" value="Ensembl"/>
</dbReference>
<dbReference type="GO" id="GO:0048538">
    <property type="term" value="P:thymus development"/>
    <property type="evidence" value="ECO:0007669"/>
    <property type="project" value="Ensembl"/>
</dbReference>
<dbReference type="GO" id="GO:0003229">
    <property type="term" value="P:ventricular cardiac muscle tissue development"/>
    <property type="evidence" value="ECO:0007669"/>
    <property type="project" value="Ensembl"/>
</dbReference>
<dbReference type="CDD" id="cd07343">
    <property type="entry name" value="M48A_Zmpste24p_like"/>
    <property type="match status" value="1"/>
</dbReference>
<dbReference type="Gene3D" id="3.30.2010.10">
    <property type="entry name" value="Metalloproteases ('zincins'), catalytic domain"/>
    <property type="match status" value="1"/>
</dbReference>
<dbReference type="InterPro" id="IPR027057">
    <property type="entry name" value="CAXX_Prtase_1"/>
</dbReference>
<dbReference type="InterPro" id="IPR001915">
    <property type="entry name" value="Peptidase_M48"/>
</dbReference>
<dbReference type="InterPro" id="IPR032456">
    <property type="entry name" value="Peptidase_M48_N"/>
</dbReference>
<dbReference type="PANTHER" id="PTHR10120">
    <property type="entry name" value="CAAX PRENYL PROTEASE 1"/>
    <property type="match status" value="1"/>
</dbReference>
<dbReference type="Pfam" id="PF01435">
    <property type="entry name" value="Peptidase_M48"/>
    <property type="match status" value="1"/>
</dbReference>
<dbReference type="Pfam" id="PF16491">
    <property type="entry name" value="Peptidase_M48_N"/>
    <property type="match status" value="1"/>
</dbReference>
<name>FACE1_HUMAN</name>
<protein>
    <recommendedName>
        <fullName>CAAX prenyl protease 1 homolog</fullName>
        <ecNumber evidence="12 13">3.4.24.84</ecNumber>
    </recommendedName>
    <alternativeName>
        <fullName evidence="16">Farnesylated proteins-converting enzyme 1</fullName>
        <shortName evidence="16">FACE-1</shortName>
    </alternativeName>
    <alternativeName>
        <fullName>Prenyl protein-specific endoprotease 1</fullName>
    </alternativeName>
    <alternativeName>
        <fullName evidence="15">Zinc metalloproteinase Ste24 homolog</fullName>
    </alternativeName>
</protein>
<reference key="1">
    <citation type="journal article" date="1999" name="Biochim. Biophys. Acta">
        <title>Identification of a human cDNA encoding a novel protein structurally related to the yeast membrane-associated metalloprotease, Ste24p.</title>
        <authorList>
            <person name="Kumagai H."/>
            <person name="Kawamura Y."/>
            <person name="Yanagisawa K."/>
            <person name="Komano H."/>
        </authorList>
    </citation>
    <scope>NUCLEOTIDE SEQUENCE [MRNA]</scope>
    <scope>TISSUE SPECIFICITY</scope>
    <source>
        <tissue>Brain</tissue>
    </source>
</reference>
<reference key="2">
    <citation type="journal article" date="1998" name="J. Cell Biol.">
        <title>Dual roles for Ste24p in yeast a-factor maturation: NH2-terminal proteolysis and COOH-terminal CAAX processing.</title>
        <authorList>
            <person name="Tam A."/>
            <person name="Nouvet F.J."/>
            <person name="Fujimura-Kamada K."/>
            <person name="Slunt H."/>
            <person name="Sisodia S.S."/>
            <person name="Michaelis S."/>
        </authorList>
    </citation>
    <scope>NUCLEOTIDE SEQUENCE [MRNA]</scope>
    <source>
        <tissue>B-cell</tissue>
        <tissue>Fetal brain</tissue>
    </source>
</reference>
<reference key="3">
    <citation type="journal article" date="1999" name="Genomics">
        <title>Identification and chromosomal location of two human genes encoding enzymes potentially involved in proteolytic maturation of farnesylated proteins.</title>
        <authorList>
            <person name="Freije J.M.P."/>
            <person name="Blay P."/>
            <person name="Pendas A.M."/>
            <person name="Cadinanos J."/>
            <person name="Crespo P."/>
            <person name="Lopez-Otin C."/>
        </authorList>
    </citation>
    <scope>NUCLEOTIDE SEQUENCE [MRNA]</scope>
    <source>
        <tissue>Ovary</tissue>
    </source>
</reference>
<reference key="4">
    <citation type="journal article" date="2005" name="DNA Res.">
        <title>Signal sequence and keyword trap in silico for selection of full-length human cDNAs encoding secretion or membrane proteins from oligo-capped cDNA libraries.</title>
        <authorList>
            <person name="Otsuki T."/>
            <person name="Ota T."/>
            <person name="Nishikawa T."/>
            <person name="Hayashi K."/>
            <person name="Suzuki Y."/>
            <person name="Yamamoto J."/>
            <person name="Wakamatsu A."/>
            <person name="Kimura K."/>
            <person name="Sakamoto K."/>
            <person name="Hatano N."/>
            <person name="Kawai Y."/>
            <person name="Ishii S."/>
            <person name="Saito K."/>
            <person name="Kojima S."/>
            <person name="Sugiyama T."/>
            <person name="Ono T."/>
            <person name="Okano K."/>
            <person name="Yoshikawa Y."/>
            <person name="Aotsuka S."/>
            <person name="Sasaki N."/>
            <person name="Hattori A."/>
            <person name="Okumura K."/>
            <person name="Nagai K."/>
            <person name="Sugano S."/>
            <person name="Isogai T."/>
        </authorList>
    </citation>
    <scope>NUCLEOTIDE SEQUENCE [LARGE SCALE MRNA]</scope>
</reference>
<reference key="5">
    <citation type="journal article" date="2006" name="Nature">
        <title>The DNA sequence and biological annotation of human chromosome 1.</title>
        <authorList>
            <person name="Gregory S.G."/>
            <person name="Barlow K.F."/>
            <person name="McLay K.E."/>
            <person name="Kaul R."/>
            <person name="Swarbreck D."/>
            <person name="Dunham A."/>
            <person name="Scott C.E."/>
            <person name="Howe K.L."/>
            <person name="Woodfine K."/>
            <person name="Spencer C.C.A."/>
            <person name="Jones M.C."/>
            <person name="Gillson C."/>
            <person name="Searle S."/>
            <person name="Zhou Y."/>
            <person name="Kokocinski F."/>
            <person name="McDonald L."/>
            <person name="Evans R."/>
            <person name="Phillips K."/>
            <person name="Atkinson A."/>
            <person name="Cooper R."/>
            <person name="Jones C."/>
            <person name="Hall R.E."/>
            <person name="Andrews T.D."/>
            <person name="Lloyd C."/>
            <person name="Ainscough R."/>
            <person name="Almeida J.P."/>
            <person name="Ambrose K.D."/>
            <person name="Anderson F."/>
            <person name="Andrew R.W."/>
            <person name="Ashwell R.I.S."/>
            <person name="Aubin K."/>
            <person name="Babbage A.K."/>
            <person name="Bagguley C.L."/>
            <person name="Bailey J."/>
            <person name="Beasley H."/>
            <person name="Bethel G."/>
            <person name="Bird C.P."/>
            <person name="Bray-Allen S."/>
            <person name="Brown J.Y."/>
            <person name="Brown A.J."/>
            <person name="Buckley D."/>
            <person name="Burton J."/>
            <person name="Bye J."/>
            <person name="Carder C."/>
            <person name="Chapman J.C."/>
            <person name="Clark S.Y."/>
            <person name="Clarke G."/>
            <person name="Clee C."/>
            <person name="Cobley V."/>
            <person name="Collier R.E."/>
            <person name="Corby N."/>
            <person name="Coville G.J."/>
            <person name="Davies J."/>
            <person name="Deadman R."/>
            <person name="Dunn M."/>
            <person name="Earthrowl M."/>
            <person name="Ellington A.G."/>
            <person name="Errington H."/>
            <person name="Frankish A."/>
            <person name="Frankland J."/>
            <person name="French L."/>
            <person name="Garner P."/>
            <person name="Garnett J."/>
            <person name="Gay L."/>
            <person name="Ghori M.R.J."/>
            <person name="Gibson R."/>
            <person name="Gilby L.M."/>
            <person name="Gillett W."/>
            <person name="Glithero R.J."/>
            <person name="Grafham D.V."/>
            <person name="Griffiths C."/>
            <person name="Griffiths-Jones S."/>
            <person name="Grocock R."/>
            <person name="Hammond S."/>
            <person name="Harrison E.S.I."/>
            <person name="Hart E."/>
            <person name="Haugen E."/>
            <person name="Heath P.D."/>
            <person name="Holmes S."/>
            <person name="Holt K."/>
            <person name="Howden P.J."/>
            <person name="Hunt A.R."/>
            <person name="Hunt S.E."/>
            <person name="Hunter G."/>
            <person name="Isherwood J."/>
            <person name="James R."/>
            <person name="Johnson C."/>
            <person name="Johnson D."/>
            <person name="Joy A."/>
            <person name="Kay M."/>
            <person name="Kershaw J.K."/>
            <person name="Kibukawa M."/>
            <person name="Kimberley A.M."/>
            <person name="King A."/>
            <person name="Knights A.J."/>
            <person name="Lad H."/>
            <person name="Laird G."/>
            <person name="Lawlor S."/>
            <person name="Leongamornlert D.A."/>
            <person name="Lloyd D.M."/>
            <person name="Loveland J."/>
            <person name="Lovell J."/>
            <person name="Lush M.J."/>
            <person name="Lyne R."/>
            <person name="Martin S."/>
            <person name="Mashreghi-Mohammadi M."/>
            <person name="Matthews L."/>
            <person name="Matthews N.S.W."/>
            <person name="McLaren S."/>
            <person name="Milne S."/>
            <person name="Mistry S."/>
            <person name="Moore M.J.F."/>
            <person name="Nickerson T."/>
            <person name="O'Dell C.N."/>
            <person name="Oliver K."/>
            <person name="Palmeiri A."/>
            <person name="Palmer S.A."/>
            <person name="Parker A."/>
            <person name="Patel D."/>
            <person name="Pearce A.V."/>
            <person name="Peck A.I."/>
            <person name="Pelan S."/>
            <person name="Phelps K."/>
            <person name="Phillimore B.J."/>
            <person name="Plumb R."/>
            <person name="Rajan J."/>
            <person name="Raymond C."/>
            <person name="Rouse G."/>
            <person name="Saenphimmachak C."/>
            <person name="Sehra H.K."/>
            <person name="Sheridan E."/>
            <person name="Shownkeen R."/>
            <person name="Sims S."/>
            <person name="Skuce C.D."/>
            <person name="Smith M."/>
            <person name="Steward C."/>
            <person name="Subramanian S."/>
            <person name="Sycamore N."/>
            <person name="Tracey A."/>
            <person name="Tromans A."/>
            <person name="Van Helmond Z."/>
            <person name="Wall M."/>
            <person name="Wallis J.M."/>
            <person name="White S."/>
            <person name="Whitehead S.L."/>
            <person name="Wilkinson J.E."/>
            <person name="Willey D.L."/>
            <person name="Williams H."/>
            <person name="Wilming L."/>
            <person name="Wray P.W."/>
            <person name="Wu Z."/>
            <person name="Coulson A."/>
            <person name="Vaudin M."/>
            <person name="Sulston J.E."/>
            <person name="Durbin R.M."/>
            <person name="Hubbard T."/>
            <person name="Wooster R."/>
            <person name="Dunham I."/>
            <person name="Carter N.P."/>
            <person name="McVean G."/>
            <person name="Ross M.T."/>
            <person name="Harrow J."/>
            <person name="Olson M.V."/>
            <person name="Beck S."/>
            <person name="Rogers J."/>
            <person name="Bentley D.R."/>
        </authorList>
    </citation>
    <scope>NUCLEOTIDE SEQUENCE [LARGE SCALE GENOMIC DNA]</scope>
</reference>
<reference key="6">
    <citation type="submission" date="2005-09" db="EMBL/GenBank/DDBJ databases">
        <authorList>
            <person name="Mural R.J."/>
            <person name="Istrail S."/>
            <person name="Sutton G.G."/>
            <person name="Florea L."/>
            <person name="Halpern A.L."/>
            <person name="Mobarry C.M."/>
            <person name="Lippert R."/>
            <person name="Walenz B."/>
            <person name="Shatkay H."/>
            <person name="Dew I."/>
            <person name="Miller J.R."/>
            <person name="Flanigan M.J."/>
            <person name="Edwards N.J."/>
            <person name="Bolanos R."/>
            <person name="Fasulo D."/>
            <person name="Halldorsson B.V."/>
            <person name="Hannenhalli S."/>
            <person name="Turner R."/>
            <person name="Yooseph S."/>
            <person name="Lu F."/>
            <person name="Nusskern D.R."/>
            <person name="Shue B.C."/>
            <person name="Zheng X.H."/>
            <person name="Zhong F."/>
            <person name="Delcher A.L."/>
            <person name="Huson D.H."/>
            <person name="Kravitz S.A."/>
            <person name="Mouchard L."/>
            <person name="Reinert K."/>
            <person name="Remington K.A."/>
            <person name="Clark A.G."/>
            <person name="Waterman M.S."/>
            <person name="Eichler E.E."/>
            <person name="Adams M.D."/>
            <person name="Hunkapiller M.W."/>
            <person name="Myers E.W."/>
            <person name="Venter J.C."/>
        </authorList>
    </citation>
    <scope>NUCLEOTIDE SEQUENCE [LARGE SCALE GENOMIC DNA]</scope>
</reference>
<reference key="7">
    <citation type="journal article" date="2004" name="Genome Res.">
        <title>The status, quality, and expansion of the NIH full-length cDNA project: the Mammalian Gene Collection (MGC).</title>
        <authorList>
            <consortium name="The MGC Project Team"/>
        </authorList>
    </citation>
    <scope>NUCLEOTIDE SEQUENCE [LARGE SCALE MRNA]</scope>
    <scope>VARIANT ALA-137</scope>
    <source>
        <tissue>Testis</tissue>
    </source>
</reference>
<reference key="8">
    <citation type="journal article" date="2008" name="Proc. Natl. Acad. Sci. U.S.A.">
        <title>A quantitative atlas of mitotic phosphorylation.</title>
        <authorList>
            <person name="Dephoure N."/>
            <person name="Zhou C."/>
            <person name="Villen J."/>
            <person name="Beausoleil S.A."/>
            <person name="Bakalarski C.E."/>
            <person name="Elledge S.J."/>
            <person name="Gygi S.P."/>
        </authorList>
    </citation>
    <scope>IDENTIFICATION BY MASS SPECTROMETRY [LARGE SCALE ANALYSIS]</scope>
    <source>
        <tissue>Cervix carcinoma</tissue>
    </source>
</reference>
<reference key="9">
    <citation type="journal article" date="2011" name="BMC Syst. Biol.">
        <title>Initial characterization of the human central proteome.</title>
        <authorList>
            <person name="Burkard T.R."/>
            <person name="Planyavsky M."/>
            <person name="Kaupe I."/>
            <person name="Breitwieser F.P."/>
            <person name="Buerckstuemmer T."/>
            <person name="Bennett K.L."/>
            <person name="Superti-Furga G."/>
            <person name="Colinge J."/>
        </authorList>
    </citation>
    <scope>IDENTIFICATION BY MASS SPECTROMETRY [LARGE SCALE ANALYSIS]</scope>
</reference>
<reference key="10">
    <citation type="journal article" date="2017" name="J. Exp. Med.">
        <title>ZMPSTE24 defends against influenza and other pathogenic viruses.</title>
        <authorList>
            <person name="Fu B."/>
            <person name="Wang L."/>
            <person name="Li S."/>
            <person name="Dorf M.E."/>
        </authorList>
    </citation>
    <scope>FUNCTION</scope>
    <scope>SUBCELLULAR LOCATION</scope>
    <scope>MUTAGENESIS OF HIS-335 AND GLU-336</scope>
    <scope>INDUCTION BY TYPE I INTERFERON</scope>
</reference>
<reference key="11">
    <citation type="journal article" date="2017" name="Nat. Commun.">
        <title>Comparative influenza protein interactomes identify the role of plakophilin 2 in virus restriction.</title>
        <authorList>
            <person name="Wang L."/>
            <person name="Fu B."/>
            <person name="Li W."/>
            <person name="Patil G."/>
            <person name="Liu L."/>
            <person name="Dorf M.E."/>
            <person name="Li S."/>
        </authorList>
    </citation>
    <scope>FUNCTION</scope>
</reference>
<reference key="12">
    <citation type="journal article" date="2020" name="PLoS ONE">
        <title>Defining substrate requirements for cleavage of farnesylated prelamin A by the integral membrane zinc metalloprotease ZMPSTE24.</title>
        <authorList>
            <person name="Wood K.M."/>
            <person name="Spear E.D."/>
            <person name="Mossberg O.W."/>
            <person name="Odinammadu K.O."/>
            <person name="Xu W."/>
            <person name="Michaelis S."/>
        </authorList>
    </citation>
    <scope>FUNCTION</scope>
    <scope>CATALYTIC ACTIVITY</scope>
</reference>
<reference key="13">
    <citation type="journal article" date="2021" name="J. Biol. Chem.">
        <title>Site specificity determinants for prelamin A cleavage by the zinc metalloprotease ZMPSTE24.</title>
        <authorList>
            <person name="Babatz T.D."/>
            <person name="Spear E.D."/>
            <person name="Xu W."/>
            <person name="Sun O.L."/>
            <person name="Nie L."/>
            <person name="Carpenter E.P."/>
            <person name="Michaelis S."/>
        </authorList>
    </citation>
    <scope>FUNCTION</scope>
    <scope>CATALYTIC ACTIVITY</scope>
</reference>
<reference key="14">
    <citation type="journal article" date="2022" name="Front. Microbiol.">
        <title>Inhibition of Arenavirus Entry and Replication by the Cell-Intrinsic Restriction Factor ZMPSTE24 Is Enhanced by IFITM Antiviral Activity.</title>
        <authorList>
            <person name="Stott-Marshall R.J."/>
            <person name="Foster T.L."/>
        </authorList>
    </citation>
    <scope>FUNCTION</scope>
    <scope>SUBCELLULAR LOCATION</scope>
    <scope>INTERACTION WITH IFITM3</scope>
</reference>
<reference key="15">
    <citation type="journal article" date="2013" name="Science">
        <title>The structural basis of ZMPSTE24-dependent laminopathies.</title>
        <authorList>
            <person name="Quigley A."/>
            <person name="Dong Y.Y."/>
            <person name="Pike A.C."/>
            <person name="Dong L."/>
            <person name="Shrestha L."/>
            <person name="Berridge G."/>
            <person name="Stansfeld P.J."/>
            <person name="Sansom M.S."/>
            <person name="Edwards A.M."/>
            <person name="Bountra C."/>
            <person name="von Delft F."/>
            <person name="Bullock A.N."/>
            <person name="Burgess-Brown N.A."/>
            <person name="Carpenter E.P."/>
        </authorList>
    </citation>
    <scope>X-RAY CRYSTALLOGRAPHY (3.4 ANGSTROMS) IN COMPLEX WITH TETRAPEPTIDE</scope>
    <scope>ACTIVE SITE</scope>
    <scope>COFACTOR</scope>
    <scope>METALLOPROTEASE DOMAIN</scope>
    <scope>TOPOLOGY</scope>
    <scope>ZINC-BINDING SITES</scope>
    <scope>SUBCELLULAR LOCATION</scope>
</reference>
<reference key="16">
    <citation type="journal article" date="2003" name="Hum. Mol. Genet.">
        <title>Zinc metalloproteinase, ZMPSTE24, is mutated in mandibuloacral dysplasia.</title>
        <authorList>
            <person name="Agarwal A.K."/>
            <person name="Fryns J.-P."/>
            <person name="Auchus R.J."/>
            <person name="Garg A."/>
        </authorList>
    </citation>
    <scope>VARIANT MADB ARG-340</scope>
</reference>
<reference key="17">
    <citation type="journal article" date="2004" name="Hum. Mol. Genet.">
        <title>Lamin A and ZMPSTE24 (FACE-1) defects cause nuclear disorganization and identify restrictive dermopathy as a lethal neonatal laminopathy.</title>
        <authorList>
            <person name="Navarro C.L."/>
            <person name="De Sandre-Giovannoli A."/>
            <person name="Bernard R."/>
            <person name="Boccaccio I."/>
            <person name="Boyer A."/>
            <person name="Genevieve D."/>
            <person name="Hadj-Rabia S."/>
            <person name="Gaudy-Marqueste C."/>
            <person name="Smitt H.S."/>
            <person name="Vabres P."/>
            <person name="Faivre L."/>
            <person name="Verloes A."/>
            <person name="Van Essen T."/>
            <person name="Flori E."/>
            <person name="Hennekam R."/>
            <person name="Beemer F.A."/>
            <person name="Laurent N."/>
            <person name="Le Merrer M."/>
            <person name="Cau P."/>
            <person name="Levy N."/>
        </authorList>
    </citation>
    <scope>INVOLVEMENT IN RSDM1</scope>
</reference>
<reference key="18">
    <citation type="journal article" date="2006" name="J. Invest. Med.">
        <title>Focal segmental glomerulosclerosis in patients with mandibuloacral dysplasia owing to ZMPSTE24 deficiency.</title>
        <authorList>
            <person name="Agarwal A.K."/>
            <person name="Zhou X.J."/>
            <person name="Hall R.K."/>
            <person name="Nicholls K."/>
            <person name="Bankier A."/>
            <person name="Van Esch H."/>
            <person name="Fryns J.P."/>
            <person name="Garg A."/>
        </authorList>
    </citation>
    <scope>VARIANT MADB SER-265</scope>
</reference>
<reference key="19">
    <citation type="journal article" date="2008" name="Clin. Genet.">
        <title>Severe mandibuloacral dysplasia caused by novel compound heterozygous ZMPSTE24 mutations in two Japanese siblings.</title>
        <authorList>
            <person name="Miyoshi Y."/>
            <person name="Akagi M."/>
            <person name="Agarwal A.K."/>
            <person name="Namba N."/>
            <person name="Kato-Nishimura K."/>
            <person name="Mohri I."/>
            <person name="Yamagata M."/>
            <person name="Nakajima S."/>
            <person name="Mushiake S."/>
            <person name="Shima M."/>
            <person name="Auchus R.J."/>
            <person name="Taniike M."/>
            <person name="Garg A."/>
            <person name="Ozono K."/>
        </authorList>
    </citation>
    <scope>VARIANT MADB LEU-248</scope>
    <scope>CHARACTERIZATION OF VARIANT MADB</scope>
</reference>
<reference key="20">
    <citation type="journal article" date="2010" name="Am. J. Med. Genet. A">
        <title>Early onset mandibuloacral dysplasia due to compound heterozygous mutations in ZMPSTE24.</title>
        <authorList>
            <person name="Ahmad Z."/>
            <person name="Zackai E."/>
            <person name="Medne L."/>
            <person name="Garg A."/>
        </authorList>
    </citation>
    <scope>VARIANT MADB LEU-248</scope>
</reference>
<feature type="chain" id="PRO_0000138844" description="CAAX prenyl protease 1 homolog">
    <location>
        <begin position="1"/>
        <end position="475"/>
    </location>
</feature>
<feature type="topological domain" description="Lumenal" evidence="1">
    <location>
        <begin position="1"/>
        <end position="18"/>
    </location>
</feature>
<feature type="transmembrane region" description="Helical" evidence="1">
    <location>
        <begin position="19"/>
        <end position="39"/>
    </location>
</feature>
<feature type="topological domain" description="Nuclear" evidence="1">
    <location>
        <begin position="40"/>
        <end position="81"/>
    </location>
</feature>
<feature type="transmembrane region" description="Helical" evidence="1">
    <location>
        <begin position="82"/>
        <end position="102"/>
    </location>
</feature>
<feature type="topological domain" description="Lumenal" evidence="1">
    <location>
        <begin position="103"/>
        <end position="123"/>
    </location>
</feature>
<feature type="transmembrane region" description="Helical" evidence="1">
    <location>
        <begin position="124"/>
        <end position="144"/>
    </location>
</feature>
<feature type="topological domain" description="Nuclear" evidence="1">
    <location>
        <begin position="145"/>
        <end position="170"/>
    </location>
</feature>
<feature type="transmembrane region" description="Helical" evidence="1">
    <location>
        <begin position="171"/>
        <end position="191"/>
    </location>
</feature>
<feature type="topological domain" description="Lumenal" evidence="1">
    <location>
        <begin position="192"/>
        <end position="195"/>
    </location>
</feature>
<feature type="transmembrane region" description="Helical" evidence="1">
    <location>
        <begin position="196"/>
        <end position="216"/>
    </location>
</feature>
<feature type="topological domain" description="Nuclear" evidence="1">
    <location>
        <begin position="217"/>
        <end position="347"/>
    </location>
</feature>
<feature type="transmembrane region" description="Helical" evidence="1">
    <location>
        <begin position="348"/>
        <end position="368"/>
    </location>
</feature>
<feature type="topological domain" description="Lumenal" evidence="1">
    <location>
        <begin position="369"/>
        <end position="382"/>
    </location>
</feature>
<feature type="transmembrane region" description="Helical" evidence="1">
    <location>
        <begin position="383"/>
        <end position="405"/>
    </location>
</feature>
<feature type="topological domain" description="Nuclear" evidence="1">
    <location>
        <begin position="406"/>
        <end position="475"/>
    </location>
</feature>
<feature type="active site" evidence="9">
    <location>
        <position position="336"/>
    </location>
</feature>
<feature type="binding site" evidence="9">
    <location>
        <position position="335"/>
    </location>
    <ligand>
        <name>Zn(2+)</name>
        <dbReference type="ChEBI" id="CHEBI:29105"/>
        <note>catalytic</note>
    </ligand>
</feature>
<feature type="binding site" evidence="9">
    <location>
        <position position="339"/>
    </location>
    <ligand>
        <name>Zn(2+)</name>
        <dbReference type="ChEBI" id="CHEBI:29105"/>
        <note>catalytic</note>
    </ligand>
</feature>
<feature type="binding site" evidence="9">
    <location>
        <position position="415"/>
    </location>
    <ligand>
        <name>Zn(2+)</name>
        <dbReference type="ChEBI" id="CHEBI:29105"/>
        <note>catalytic</note>
    </ligand>
</feature>
<feature type="sequence variant" id="VAR_034711" description="In dbSNP:rs17853725." evidence="5">
    <original>T</original>
    <variation>A</variation>
    <location>
        <position position="137"/>
    </location>
</feature>
<feature type="sequence variant" id="VAR_064501" description="In MADB; does not affect enzyme activity; dbSNP:rs121908095." evidence="7 8">
    <original>P</original>
    <variation>L</variation>
    <location>
        <position position="248"/>
    </location>
</feature>
<feature type="sequence variant" id="VAR_064502" description="In MADB; dbSNP:rs281875371." evidence="6">
    <original>N</original>
    <variation>S</variation>
    <location>
        <position position="265"/>
    </location>
</feature>
<feature type="sequence variant" id="VAR_019308" description="In MADB; dbSNP:rs121908093." evidence="3">
    <original>W</original>
    <variation>R</variation>
    <location>
        <position position="340"/>
    </location>
</feature>
<feature type="mutagenesis site" description="Loss of catalytic activity but not viral restriction." evidence="11">
    <original>H</original>
    <variation>A</variation>
    <location>
        <position position="335"/>
    </location>
</feature>
<feature type="mutagenesis site" description="Loss of catalytic activity but not viral restriction." evidence="11">
    <original>E</original>
    <variation>A</variation>
    <location>
        <position position="336"/>
    </location>
</feature>
<feature type="sequence conflict" description="In Ref. 1; BAA33727." evidence="18" ref="1">
    <original>E</original>
    <variation>K</variation>
    <location>
        <position position="16"/>
    </location>
</feature>
<feature type="strand" evidence="20">
    <location>
        <begin position="11"/>
        <end position="13"/>
    </location>
</feature>
<feature type="helix" evidence="21">
    <location>
        <begin position="15"/>
        <end position="47"/>
    </location>
</feature>
<feature type="helix" evidence="21">
    <location>
        <begin position="53"/>
        <end position="55"/>
    </location>
</feature>
<feature type="turn" evidence="21">
    <location>
        <begin position="56"/>
        <end position="58"/>
    </location>
</feature>
<feature type="helix" evidence="21">
    <location>
        <begin position="61"/>
        <end position="94"/>
    </location>
</feature>
<feature type="helix" evidence="21">
    <location>
        <begin position="97"/>
        <end position="111"/>
    </location>
</feature>
<feature type="helix" evidence="21">
    <location>
        <begin position="119"/>
        <end position="147"/>
    </location>
</feature>
<feature type="helix" evidence="21">
    <location>
        <begin position="149"/>
        <end position="152"/>
    </location>
</feature>
<feature type="helix" evidence="21">
    <location>
        <begin position="160"/>
        <end position="191"/>
    </location>
</feature>
<feature type="helix" evidence="21">
    <location>
        <begin position="196"/>
        <end position="218"/>
    </location>
</feature>
<feature type="helix" evidence="21">
    <location>
        <begin position="220"/>
        <end position="223"/>
    </location>
</feature>
<feature type="strand" evidence="21">
    <location>
        <begin position="226"/>
        <end position="228"/>
    </location>
</feature>
<feature type="helix" evidence="21">
    <location>
        <begin position="233"/>
        <end position="244"/>
    </location>
</feature>
<feature type="strand" evidence="21">
    <location>
        <begin position="252"/>
        <end position="255"/>
    </location>
</feature>
<feature type="helix" evidence="21">
    <location>
        <begin position="257"/>
        <end position="259"/>
    </location>
</feature>
<feature type="strand" evidence="20">
    <location>
        <begin position="266"/>
        <end position="273"/>
    </location>
</feature>
<feature type="strand" evidence="21">
    <location>
        <begin position="277"/>
        <end position="280"/>
    </location>
</feature>
<feature type="helix" evidence="21">
    <location>
        <begin position="281"/>
        <end position="283"/>
    </location>
</feature>
<feature type="turn" evidence="21">
    <location>
        <begin position="285"/>
        <end position="287"/>
    </location>
</feature>
<feature type="turn" evidence="21">
    <location>
        <begin position="289"/>
        <end position="291"/>
    </location>
</feature>
<feature type="helix" evidence="21">
    <location>
        <begin position="317"/>
        <end position="319"/>
    </location>
</feature>
<feature type="strand" evidence="21">
    <location>
        <begin position="322"/>
        <end position="324"/>
    </location>
</feature>
<feature type="helix" evidence="21">
    <location>
        <begin position="326"/>
        <end position="341"/>
    </location>
</feature>
<feature type="helix" evidence="21">
    <location>
        <begin position="344"/>
        <end position="366"/>
    </location>
</feature>
<feature type="helix" evidence="21">
    <location>
        <begin position="370"/>
        <end position="374"/>
    </location>
</feature>
<feature type="turn" evidence="21">
    <location>
        <begin position="375"/>
        <end position="377"/>
    </location>
</feature>
<feature type="helix" evidence="21">
    <location>
        <begin position="384"/>
        <end position="393"/>
    </location>
</feature>
<feature type="turn" evidence="21">
    <location>
        <begin position="394"/>
        <end position="396"/>
    </location>
</feature>
<feature type="helix" evidence="21">
    <location>
        <begin position="397"/>
        <end position="424"/>
    </location>
</feature>
<feature type="turn" evidence="20">
    <location>
        <begin position="425"/>
        <end position="427"/>
    </location>
</feature>
<feature type="helix" evidence="21">
    <location>
        <begin position="428"/>
        <end position="441"/>
    </location>
</feature>
<feature type="helix" evidence="21">
    <location>
        <begin position="450"/>
        <end position="456"/>
    </location>
</feature>
<feature type="helix" evidence="21">
    <location>
        <begin position="462"/>
        <end position="470"/>
    </location>
</feature>
<proteinExistence type="evidence at protein level"/>
<sequence>MGMWASLDALWEMPAEKRIFGAVLLFSWTVYLWETFLAQRQRRIYKTTTHVPPELGQIMDSETFEKSRLYQLDKSTFSFWSGLYSETEGTLILLFGGIPYLWRLSGRFCGYAGFGPEYEITQSLVFLLLATLFSALTGLPWSLYNTFVIEEKHGFNQQTLGFFMKDAIKKFVVTQCILLPVSSLLLYIIKIGGDYFFIYAWLFTLVVSLVLVTIYADYIAPLFDKFTPLPEGKLKEEIEVMAKSIDFPLTKVYVVEGSKRSSHSNAYFYGFFKNKRIVLFDTLLEEYSVLNKDIQEDSGMEPRNEEEGNSEEIKAKVKNKKQGCKNEEVLAVLGHELGHWKLGHTVKNIIISQMNSFLCFFLFAVLIGRKELFAAFGFYDSQPTLIGLLIIFQFIFSPYNEVLSFCLTVLSRRFEFQADAFAKKLGKAKDLYSALIKLNKDNLGFPVSDWLFSMWHYSHPPLLERLQALKTMKQH</sequence>
<comment type="function">
    <text evidence="10 11 12 13 14">Transmembrane metalloprotease whose catalytic activity is critical for processing lamin A/LMNA on the inner nuclear membrane and clearing clogged translocons on the endoplasmic reticulum (PubMed:33293369, PubMed:33315887). Proteolytically removes the C-terminal three residues of farnesylated proteins (PubMed:33293369, PubMed:33315887). Also plays an antiviral role independently of its protease activity by restricting enveloped RNA and DNA viruses, including influenza A, Zika, Ebola, Sindbis, vesicular stomatitis, cowpox, and vaccinia (PubMed:28169297, PubMed:28246125). Mechanistically, controls IFITM antiviral pathway to hinder viruses from breaching the endosomal barrier by modulating membrane fluidity (PubMed:35283811).</text>
</comment>
<comment type="catalytic activity">
    <reaction evidence="12 13">
        <text>Hydrolyzes the peptide bond -P2-(S-farnesyl or geranylgeranyl)C-P1'-P2'-P3'-COOH where P1' and P2' are amino acids with aliphatic side chains and P3' is any C-terminal residue.</text>
        <dbReference type="EC" id="3.4.24.84"/>
    </reaction>
</comment>
<comment type="cofactor">
    <cofactor evidence="9">
        <name>Zn(2+)</name>
        <dbReference type="ChEBI" id="CHEBI:29105"/>
    </cofactor>
    <text evidence="9">Binds 1 zinc ion per subunit.</text>
</comment>
<comment type="interaction">
    <interactant intactId="EBI-1056377">
        <id>O75844</id>
    </interactant>
    <interactant intactId="EBI-21800352">
        <id>O15263</id>
        <label>DEFB4B</label>
    </interactant>
    <organismsDiffer>false</organismsDiffer>
    <experiments>2</experiments>
</comment>
<comment type="interaction">
    <interactant intactId="EBI-1056377">
        <id>O75844</id>
    </interactant>
    <interactant intactId="EBI-351949">
        <id>P02545-1</id>
        <label>LMNA</label>
    </interactant>
    <organismsDiffer>false</organismsDiffer>
    <experiments>2</experiments>
</comment>
<comment type="interaction">
    <interactant intactId="EBI-1056377">
        <id>O75844</id>
    </interactant>
    <interactant intactId="EBI-2547404">
        <id>P06821</id>
        <label>M</label>
    </interactant>
    <organismsDiffer>true</organismsDiffer>
    <experiments>2</experiments>
</comment>
<comment type="interaction">
    <interactant intactId="EBI-1056377">
        <id>O75844</id>
    </interactant>
    <interactant intactId="EBI-12562139">
        <id>C5E519</id>
        <label>M2</label>
    </interactant>
    <organismsDiffer>true</organismsDiffer>
    <experiments>2</experiments>
</comment>
<comment type="interaction">
    <interactant intactId="EBI-1056377">
        <id>O75844</id>
    </interactant>
    <interactant intactId="EBI-12576433">
        <id>Q20MH8</id>
        <label>M2</label>
    </interactant>
    <organismsDiffer>true</organismsDiffer>
    <experiments>2</experiments>
</comment>
<comment type="subcellular location">
    <subcellularLocation>
        <location evidence="9">Endoplasmic reticulum membrane</location>
        <topology evidence="1">Multi-pass membrane protein</topology>
    </subcellularLocation>
    <subcellularLocation>
        <location evidence="9">Nucleus inner membrane</location>
        <topology evidence="1">Multi-pass membrane protein</topology>
    </subcellularLocation>
    <subcellularLocation>
        <location evidence="14">Early endosome membrane</location>
        <topology evidence="1">Multi-pass membrane protein</topology>
    </subcellularLocation>
    <subcellularLocation>
        <location evidence="14">Late endosome membrane</location>
        <topology evidence="1">Multi-pass membrane protein</topology>
    </subcellularLocation>
</comment>
<comment type="tissue specificity">
    <text evidence="2">Widely expressed. High levels in kidney, prostate, testis and ovary.</text>
</comment>
<comment type="induction">
    <text evidence="13">By type I interferon.</text>
</comment>
<comment type="domain">
    <text evidence="9">The metalloprotease domain is constituted by the two C-terminal nuclear regions.</text>
</comment>
<comment type="disease" evidence="3 6 7 8">
    <disease id="DI-01933">
        <name>Mandibuloacral dysplasia with type B lipodystrophy</name>
        <acronym>MADB</acronym>
        <description>A form of mandibuloacral dysplasia, a rare progeroid disorder with clinical and genetic heterogeneity, characterized by growth retardation, craniofacial dysmorphic features due to distal bone resorption, musculoskeletal and skin abnormalities associated with lipodystrophy. MADB is a disease characterized by mandibular and clavicular hypoplasia, acroosteolysis, delayed closure of the cranial suture, joint contractures, and generalized lipodystrophy with loss of subcutaneous fat from the extremities, face, neck and trunk.</description>
        <dbReference type="MIM" id="608612"/>
    </disease>
    <text>The disease is caused by variants affecting the gene represented in this entry.</text>
</comment>
<comment type="disease" evidence="4">
    <disease id="DI-01894">
        <name>Restrictive dermopathy 1</name>
        <acronym>RSDM1</acronym>
        <description>An autosomal recessive form of restrictive dermopathy, a genodermatosis mainly characterized by intrauterine growth retardation, tight and rigid skin with erosions, prominent superficial vasculature and epidermal hyperkeratosis, facial dysmorphism, sparse/absent eyelashes and eyebrows, mineralization defects of the skull, thin dysplastic clavicles, pulmonary hypoplasia, multiple joint contractures and an early neonatal lethal course. Liveborn children usually die within the first week of life.</description>
        <dbReference type="MIM" id="275210"/>
    </disease>
    <text>The disease is caused by variants affecting the gene represented in this entry.</text>
</comment>
<comment type="similarity">
    <text evidence="18">Belongs to the peptidase M48A family.</text>
</comment>
<gene>
    <name evidence="17 19" type="primary">ZMPSTE24</name>
    <name evidence="16" type="synonym">FACE1</name>
    <name evidence="15" type="synonym">STE24</name>
</gene>
<keyword id="KW-0002">3D-structure</keyword>
<keyword id="KW-0930">Antiviral protein</keyword>
<keyword id="KW-0225">Disease variant</keyword>
<keyword id="KW-0256">Endoplasmic reticulum</keyword>
<keyword id="KW-0967">Endosome</keyword>
<keyword id="KW-0378">Hydrolase</keyword>
<keyword id="KW-0472">Membrane</keyword>
<keyword id="KW-0479">Metal-binding</keyword>
<keyword id="KW-0482">Metalloprotease</keyword>
<keyword id="KW-0539">Nucleus</keyword>
<keyword id="KW-0645">Protease</keyword>
<keyword id="KW-1267">Proteomics identification</keyword>
<keyword id="KW-1185">Reference proteome</keyword>
<keyword id="KW-0812">Transmembrane</keyword>
<keyword id="KW-1133">Transmembrane helix</keyword>
<keyword id="KW-0862">Zinc</keyword>
<accession>O75844</accession>
<accession>B3KQI7</accession>
<accession>D3DPU7</accession>
<accession>Q8NDZ8</accession>
<accession>Q9UBQ2</accession>
<evidence type="ECO:0000255" key="1"/>
<evidence type="ECO:0000269" key="2">
    <source>
    </source>
</evidence>
<evidence type="ECO:0000269" key="3">
    <source>
    </source>
</evidence>
<evidence type="ECO:0000269" key="4">
    <source>
    </source>
</evidence>
<evidence type="ECO:0000269" key="5">
    <source>
    </source>
</evidence>
<evidence type="ECO:0000269" key="6">
    <source>
    </source>
</evidence>
<evidence type="ECO:0000269" key="7">
    <source>
    </source>
</evidence>
<evidence type="ECO:0000269" key="8">
    <source>
    </source>
</evidence>
<evidence type="ECO:0000269" key="9">
    <source>
    </source>
</evidence>
<evidence type="ECO:0000269" key="10">
    <source>
    </source>
</evidence>
<evidence type="ECO:0000269" key="11">
    <source>
    </source>
</evidence>
<evidence type="ECO:0000269" key="12">
    <source>
    </source>
</evidence>
<evidence type="ECO:0000269" key="13">
    <source>
    </source>
</evidence>
<evidence type="ECO:0000269" key="14">
    <source>
    </source>
</evidence>
<evidence type="ECO:0000303" key="15">
    <source>
    </source>
</evidence>
<evidence type="ECO:0000303" key="16">
    <source>
    </source>
</evidence>
<evidence type="ECO:0000303" key="17">
    <source>
    </source>
</evidence>
<evidence type="ECO:0000305" key="18"/>
<evidence type="ECO:0000312" key="19">
    <source>
        <dbReference type="HGNC" id="HGNC:12877"/>
    </source>
</evidence>
<evidence type="ECO:0007829" key="20">
    <source>
        <dbReference type="PDB" id="4AW6"/>
    </source>
</evidence>
<evidence type="ECO:0007829" key="21">
    <source>
        <dbReference type="PDB" id="5SYT"/>
    </source>
</evidence>
<organism>
    <name type="scientific">Homo sapiens</name>
    <name type="common">Human</name>
    <dbReference type="NCBI Taxonomy" id="9606"/>
    <lineage>
        <taxon>Eukaryota</taxon>
        <taxon>Metazoa</taxon>
        <taxon>Chordata</taxon>
        <taxon>Craniata</taxon>
        <taxon>Vertebrata</taxon>
        <taxon>Euteleostomi</taxon>
        <taxon>Mammalia</taxon>
        <taxon>Eutheria</taxon>
        <taxon>Euarchontoglires</taxon>
        <taxon>Primates</taxon>
        <taxon>Haplorrhini</taxon>
        <taxon>Catarrhini</taxon>
        <taxon>Hominidae</taxon>
        <taxon>Homo</taxon>
    </lineage>
</organism>